<reference key="1">
    <citation type="journal article" date="2008" name="J. Biotechnol.">
        <title>The genome of Xanthomonas campestris pv. campestris B100 and its use for the reconstruction of metabolic pathways involved in xanthan biosynthesis.</title>
        <authorList>
            <person name="Vorhoelter F.-J."/>
            <person name="Schneiker S."/>
            <person name="Goesmann A."/>
            <person name="Krause L."/>
            <person name="Bekel T."/>
            <person name="Kaiser O."/>
            <person name="Linke B."/>
            <person name="Patschkowski T."/>
            <person name="Rueckert C."/>
            <person name="Schmid J."/>
            <person name="Sidhu V.K."/>
            <person name="Sieber V."/>
            <person name="Tauch A."/>
            <person name="Watt S.A."/>
            <person name="Weisshaar B."/>
            <person name="Becker A."/>
            <person name="Niehaus K."/>
            <person name="Puehler A."/>
        </authorList>
    </citation>
    <scope>NUCLEOTIDE SEQUENCE [LARGE SCALE GENOMIC DNA]</scope>
    <source>
        <strain>B100</strain>
    </source>
</reference>
<accession>B0RY47</accession>
<dbReference type="EC" id="6.3.1.21" evidence="1"/>
<dbReference type="EMBL" id="AM920689">
    <property type="protein sequence ID" value="CAP52567.1"/>
    <property type="molecule type" value="Genomic_DNA"/>
</dbReference>
<dbReference type="SMR" id="B0RY47"/>
<dbReference type="KEGG" id="xca:xcc-b100_3202"/>
<dbReference type="HOGENOM" id="CLU_011534_1_3_6"/>
<dbReference type="UniPathway" id="UPA00074">
    <property type="reaction ID" value="UER00127"/>
</dbReference>
<dbReference type="Proteomes" id="UP000001188">
    <property type="component" value="Chromosome"/>
</dbReference>
<dbReference type="GO" id="GO:0005829">
    <property type="term" value="C:cytosol"/>
    <property type="evidence" value="ECO:0007669"/>
    <property type="project" value="TreeGrafter"/>
</dbReference>
<dbReference type="GO" id="GO:0005524">
    <property type="term" value="F:ATP binding"/>
    <property type="evidence" value="ECO:0007669"/>
    <property type="project" value="UniProtKB-UniRule"/>
</dbReference>
<dbReference type="GO" id="GO:0000287">
    <property type="term" value="F:magnesium ion binding"/>
    <property type="evidence" value="ECO:0007669"/>
    <property type="project" value="InterPro"/>
</dbReference>
<dbReference type="GO" id="GO:0043815">
    <property type="term" value="F:phosphoribosylglycinamide formyltransferase 2 activity"/>
    <property type="evidence" value="ECO:0007669"/>
    <property type="project" value="UniProtKB-UniRule"/>
</dbReference>
<dbReference type="GO" id="GO:0004644">
    <property type="term" value="F:phosphoribosylglycinamide formyltransferase activity"/>
    <property type="evidence" value="ECO:0007669"/>
    <property type="project" value="InterPro"/>
</dbReference>
<dbReference type="GO" id="GO:0006189">
    <property type="term" value="P:'de novo' IMP biosynthetic process"/>
    <property type="evidence" value="ECO:0007669"/>
    <property type="project" value="UniProtKB-UniRule"/>
</dbReference>
<dbReference type="FunFam" id="3.30.1490.20:FF:000013">
    <property type="entry name" value="Formate-dependent phosphoribosylglycinamide formyltransferase"/>
    <property type="match status" value="1"/>
</dbReference>
<dbReference type="FunFam" id="3.30.470.20:FF:000027">
    <property type="entry name" value="Formate-dependent phosphoribosylglycinamide formyltransferase"/>
    <property type="match status" value="1"/>
</dbReference>
<dbReference type="FunFam" id="3.40.50.20:FF:000007">
    <property type="entry name" value="Formate-dependent phosphoribosylglycinamide formyltransferase"/>
    <property type="match status" value="1"/>
</dbReference>
<dbReference type="Gene3D" id="3.40.50.20">
    <property type="match status" value="1"/>
</dbReference>
<dbReference type="Gene3D" id="3.30.1490.20">
    <property type="entry name" value="ATP-grasp fold, A domain"/>
    <property type="match status" value="1"/>
</dbReference>
<dbReference type="Gene3D" id="3.30.470.20">
    <property type="entry name" value="ATP-grasp fold, B domain"/>
    <property type="match status" value="1"/>
</dbReference>
<dbReference type="HAMAP" id="MF_01643">
    <property type="entry name" value="PurT"/>
    <property type="match status" value="1"/>
</dbReference>
<dbReference type="InterPro" id="IPR011761">
    <property type="entry name" value="ATP-grasp"/>
</dbReference>
<dbReference type="InterPro" id="IPR003135">
    <property type="entry name" value="ATP-grasp_carboxylate-amine"/>
</dbReference>
<dbReference type="InterPro" id="IPR013815">
    <property type="entry name" value="ATP_grasp_subdomain_1"/>
</dbReference>
<dbReference type="InterPro" id="IPR016185">
    <property type="entry name" value="PreATP-grasp_dom_sf"/>
</dbReference>
<dbReference type="InterPro" id="IPR005862">
    <property type="entry name" value="PurT"/>
</dbReference>
<dbReference type="InterPro" id="IPR054350">
    <property type="entry name" value="PurT/PurK_preATP-grasp"/>
</dbReference>
<dbReference type="InterPro" id="IPR048740">
    <property type="entry name" value="PurT_C"/>
</dbReference>
<dbReference type="InterPro" id="IPR011054">
    <property type="entry name" value="Rudment_hybrid_motif"/>
</dbReference>
<dbReference type="NCBIfam" id="NF006766">
    <property type="entry name" value="PRK09288.1"/>
    <property type="match status" value="1"/>
</dbReference>
<dbReference type="NCBIfam" id="TIGR01142">
    <property type="entry name" value="purT"/>
    <property type="match status" value="1"/>
</dbReference>
<dbReference type="PANTHER" id="PTHR43055">
    <property type="entry name" value="FORMATE-DEPENDENT PHOSPHORIBOSYLGLYCINAMIDE FORMYLTRANSFERASE"/>
    <property type="match status" value="1"/>
</dbReference>
<dbReference type="PANTHER" id="PTHR43055:SF1">
    <property type="entry name" value="FORMATE-DEPENDENT PHOSPHORIBOSYLGLYCINAMIDE FORMYLTRANSFERASE"/>
    <property type="match status" value="1"/>
</dbReference>
<dbReference type="Pfam" id="PF02222">
    <property type="entry name" value="ATP-grasp"/>
    <property type="match status" value="1"/>
</dbReference>
<dbReference type="Pfam" id="PF21244">
    <property type="entry name" value="PurT_C"/>
    <property type="match status" value="1"/>
</dbReference>
<dbReference type="Pfam" id="PF22660">
    <property type="entry name" value="RS_preATP-grasp-like"/>
    <property type="match status" value="1"/>
</dbReference>
<dbReference type="SUPFAM" id="SSF56059">
    <property type="entry name" value="Glutathione synthetase ATP-binding domain-like"/>
    <property type="match status" value="1"/>
</dbReference>
<dbReference type="SUPFAM" id="SSF52440">
    <property type="entry name" value="PreATP-grasp domain"/>
    <property type="match status" value="1"/>
</dbReference>
<dbReference type="SUPFAM" id="SSF51246">
    <property type="entry name" value="Rudiment single hybrid motif"/>
    <property type="match status" value="1"/>
</dbReference>
<dbReference type="PROSITE" id="PS50975">
    <property type="entry name" value="ATP_GRASP"/>
    <property type="match status" value="1"/>
</dbReference>
<sequence length="400" mass="42926">MTTLGTPLSPSATRVLLLGSGELGKEVAIELQRFGVEVIAADRYANAPAMQVAHRSHVLDMLDPQALRALIAQEQPHLIVPEIEAIHTETLVALEHEQGQKVIPTARAARLTMDREGIRRLAAETLGLPTSPYRFVDTAAEYREAIATVGLPCVVKPVMSSSGKGQSTLRSEADIDAAWDYAQTGGRAGAGRCIVEGFIDFDYEITLLTVRHAGGTSFCDPIGHWQKDGDYRESWQPQPMSAAALRRSQEIAQAITDELGGWGLFGVELFVKGDEVWFSEVSPRPHDTGLVTLVSQELSEFALHARAILGLPVGAENGGVIRQSGPSASCALLAHGNGVPVFDNVAEALRDPDTALRLFGKPRVDGHRRVGVTLARAGSIDAAREKARVAAAALTIQLRD</sequence>
<organism>
    <name type="scientific">Xanthomonas campestris pv. campestris (strain B100)</name>
    <dbReference type="NCBI Taxonomy" id="509169"/>
    <lineage>
        <taxon>Bacteria</taxon>
        <taxon>Pseudomonadati</taxon>
        <taxon>Pseudomonadota</taxon>
        <taxon>Gammaproteobacteria</taxon>
        <taxon>Lysobacterales</taxon>
        <taxon>Lysobacteraceae</taxon>
        <taxon>Xanthomonas</taxon>
    </lineage>
</organism>
<feature type="chain" id="PRO_1000186902" description="Formate-dependent phosphoribosylglycinamide formyltransferase">
    <location>
        <begin position="1"/>
        <end position="400"/>
    </location>
</feature>
<feature type="domain" description="ATP-grasp" evidence="1">
    <location>
        <begin position="120"/>
        <end position="309"/>
    </location>
</feature>
<feature type="binding site" evidence="1">
    <location>
        <begin position="22"/>
        <end position="23"/>
    </location>
    <ligand>
        <name>N(1)-(5-phospho-beta-D-ribosyl)glycinamide</name>
        <dbReference type="ChEBI" id="CHEBI:143788"/>
    </ligand>
</feature>
<feature type="binding site" evidence="1">
    <location>
        <position position="82"/>
    </location>
    <ligand>
        <name>N(1)-(5-phospho-beta-D-ribosyl)glycinamide</name>
        <dbReference type="ChEBI" id="CHEBI:143788"/>
    </ligand>
</feature>
<feature type="binding site" evidence="1">
    <location>
        <position position="115"/>
    </location>
    <ligand>
        <name>ATP</name>
        <dbReference type="ChEBI" id="CHEBI:30616"/>
    </ligand>
</feature>
<feature type="binding site" evidence="1">
    <location>
        <position position="156"/>
    </location>
    <ligand>
        <name>ATP</name>
        <dbReference type="ChEBI" id="CHEBI:30616"/>
    </ligand>
</feature>
<feature type="binding site" evidence="1">
    <location>
        <begin position="161"/>
        <end position="166"/>
    </location>
    <ligand>
        <name>ATP</name>
        <dbReference type="ChEBI" id="CHEBI:30616"/>
    </ligand>
</feature>
<feature type="binding site" evidence="1">
    <location>
        <begin position="196"/>
        <end position="199"/>
    </location>
    <ligand>
        <name>ATP</name>
        <dbReference type="ChEBI" id="CHEBI:30616"/>
    </ligand>
</feature>
<feature type="binding site" evidence="1">
    <location>
        <position position="204"/>
    </location>
    <ligand>
        <name>ATP</name>
        <dbReference type="ChEBI" id="CHEBI:30616"/>
    </ligand>
</feature>
<feature type="binding site" evidence="1">
    <location>
        <position position="268"/>
    </location>
    <ligand>
        <name>Mg(2+)</name>
        <dbReference type="ChEBI" id="CHEBI:18420"/>
    </ligand>
</feature>
<feature type="binding site" evidence="1">
    <location>
        <position position="280"/>
    </location>
    <ligand>
        <name>Mg(2+)</name>
        <dbReference type="ChEBI" id="CHEBI:18420"/>
    </ligand>
</feature>
<feature type="binding site" evidence="1">
    <location>
        <position position="287"/>
    </location>
    <ligand>
        <name>N(1)-(5-phospho-beta-D-ribosyl)glycinamide</name>
        <dbReference type="ChEBI" id="CHEBI:143788"/>
    </ligand>
</feature>
<feature type="binding site" evidence="1">
    <location>
        <position position="361"/>
    </location>
    <ligand>
        <name>N(1)-(5-phospho-beta-D-ribosyl)glycinamide</name>
        <dbReference type="ChEBI" id="CHEBI:143788"/>
    </ligand>
</feature>
<feature type="binding site" evidence="1">
    <location>
        <begin position="368"/>
        <end position="369"/>
    </location>
    <ligand>
        <name>N(1)-(5-phospho-beta-D-ribosyl)glycinamide</name>
        <dbReference type="ChEBI" id="CHEBI:143788"/>
    </ligand>
</feature>
<gene>
    <name evidence="1" type="primary">purT</name>
    <name type="ordered locus">xcc-b100_3202</name>
</gene>
<name>PURT_XANCB</name>
<keyword id="KW-0067">ATP-binding</keyword>
<keyword id="KW-0436">Ligase</keyword>
<keyword id="KW-0460">Magnesium</keyword>
<keyword id="KW-0479">Metal-binding</keyword>
<keyword id="KW-0547">Nucleotide-binding</keyword>
<keyword id="KW-0658">Purine biosynthesis</keyword>
<proteinExistence type="inferred from homology"/>
<evidence type="ECO:0000255" key="1">
    <source>
        <dbReference type="HAMAP-Rule" id="MF_01643"/>
    </source>
</evidence>
<comment type="function">
    <text evidence="1">Involved in the de novo purine biosynthesis. Catalyzes the transfer of formate to 5-phospho-ribosyl-glycinamide (GAR), producing 5-phospho-ribosyl-N-formylglycinamide (FGAR). Formate is provided by PurU via hydrolysis of 10-formyl-tetrahydrofolate.</text>
</comment>
<comment type="catalytic activity">
    <reaction evidence="1">
        <text>N(1)-(5-phospho-beta-D-ribosyl)glycinamide + formate + ATP = N(2)-formyl-N(1)-(5-phospho-beta-D-ribosyl)glycinamide + ADP + phosphate + H(+)</text>
        <dbReference type="Rhea" id="RHEA:24829"/>
        <dbReference type="ChEBI" id="CHEBI:15378"/>
        <dbReference type="ChEBI" id="CHEBI:15740"/>
        <dbReference type="ChEBI" id="CHEBI:30616"/>
        <dbReference type="ChEBI" id="CHEBI:43474"/>
        <dbReference type="ChEBI" id="CHEBI:143788"/>
        <dbReference type="ChEBI" id="CHEBI:147286"/>
        <dbReference type="ChEBI" id="CHEBI:456216"/>
        <dbReference type="EC" id="6.3.1.21"/>
    </reaction>
    <physiologicalReaction direction="left-to-right" evidence="1">
        <dbReference type="Rhea" id="RHEA:24830"/>
    </physiologicalReaction>
</comment>
<comment type="pathway">
    <text evidence="1">Purine metabolism; IMP biosynthesis via de novo pathway; N(2)-formyl-N(1)-(5-phospho-D-ribosyl)glycinamide from N(1)-(5-phospho-D-ribosyl)glycinamide (formate route): step 1/1.</text>
</comment>
<comment type="subunit">
    <text evidence="1">Homodimer.</text>
</comment>
<comment type="similarity">
    <text evidence="1">Belongs to the PurK/PurT family.</text>
</comment>
<protein>
    <recommendedName>
        <fullName evidence="1">Formate-dependent phosphoribosylglycinamide formyltransferase</fullName>
        <ecNumber evidence="1">6.3.1.21</ecNumber>
    </recommendedName>
    <alternativeName>
        <fullName evidence="1">5'-phosphoribosylglycinamide transformylase 2</fullName>
    </alternativeName>
    <alternativeName>
        <fullName evidence="1">Formate-dependent GAR transformylase</fullName>
    </alternativeName>
    <alternativeName>
        <fullName evidence="1">GAR transformylase 2</fullName>
        <shortName evidence="1">GART 2</shortName>
    </alternativeName>
    <alternativeName>
        <fullName evidence="1">Non-folate glycinamide ribonucleotide transformylase</fullName>
    </alternativeName>
    <alternativeName>
        <fullName evidence="1">Phosphoribosylglycinamide formyltransferase 2</fullName>
    </alternativeName>
</protein>